<accession>P56414</accession>
<protein>
    <recommendedName>
        <fullName evidence="1">GTP 3',8-cyclase</fullName>
        <ecNumber evidence="1">4.1.99.22</ecNumber>
    </recommendedName>
    <alternativeName>
        <fullName evidence="1">Molybdenum cofactor biosynthesis protein A</fullName>
    </alternativeName>
</protein>
<reference key="1">
    <citation type="journal article" date="1997" name="Nature">
        <title>The complete genome sequence of the gastric pathogen Helicobacter pylori.</title>
        <authorList>
            <person name="Tomb J.-F."/>
            <person name="White O."/>
            <person name="Kerlavage A.R."/>
            <person name="Clayton R.A."/>
            <person name="Sutton G.G."/>
            <person name="Fleischmann R.D."/>
            <person name="Ketchum K.A."/>
            <person name="Klenk H.-P."/>
            <person name="Gill S.R."/>
            <person name="Dougherty B.A."/>
            <person name="Nelson K.E."/>
            <person name="Quackenbush J."/>
            <person name="Zhou L."/>
            <person name="Kirkness E.F."/>
            <person name="Peterson S.N."/>
            <person name="Loftus B.J."/>
            <person name="Richardson D.L."/>
            <person name="Dodson R.J."/>
            <person name="Khalak H.G."/>
            <person name="Glodek A."/>
            <person name="McKenney K."/>
            <person name="FitzGerald L.M."/>
            <person name="Lee N."/>
            <person name="Adams M.D."/>
            <person name="Hickey E.K."/>
            <person name="Berg D.E."/>
            <person name="Gocayne J.D."/>
            <person name="Utterback T.R."/>
            <person name="Peterson J.D."/>
            <person name="Kelley J.M."/>
            <person name="Cotton M.D."/>
            <person name="Weidman J.F."/>
            <person name="Fujii C."/>
            <person name="Bowman C."/>
            <person name="Watthey L."/>
            <person name="Wallin E."/>
            <person name="Hayes W.S."/>
            <person name="Borodovsky M."/>
            <person name="Karp P.D."/>
            <person name="Smith H.O."/>
            <person name="Fraser C.M."/>
            <person name="Venter J.C."/>
        </authorList>
    </citation>
    <scope>NUCLEOTIDE SEQUENCE [LARGE SCALE GENOMIC DNA]</scope>
    <source>
        <strain>ATCC 700392 / 26695</strain>
    </source>
</reference>
<sequence>MLVDSFNRVIDYIRVSVTKQCNFRCQYCMPATPLNFFDNEELLPLDNVLEFLKIAIDEGVKKIRITGGEPLLRKGLDEFIAKLHAYNKEVELVLSTNGFLLKKMAKDLKNAGLAQVNVSLDSLKSDRVLKISQKDALKNTLEGIEESLKVGLKLKLNTVVIKSVNDDEILELLEYAKNRHIQIRYIEFMENTHAKSLVKGLKEREILDLIAQKYQIIEAEKPKQGSSKIYTLENGYQFGIIAPHSDDFCQSCNRIRLASDGKICPCLYYQDAIDAKEAIINKDTKNIKRLLKQSVINKPEKNMWNDKNSETPTRAFYYTGG</sequence>
<proteinExistence type="inferred from homology"/>
<evidence type="ECO:0000255" key="1">
    <source>
        <dbReference type="HAMAP-Rule" id="MF_01225"/>
    </source>
</evidence>
<evidence type="ECO:0000255" key="2">
    <source>
        <dbReference type="PROSITE-ProRule" id="PRU01266"/>
    </source>
</evidence>
<comment type="function">
    <text evidence="1">Catalyzes the cyclization of GTP to (8S)-3',8-cyclo-7,8-dihydroguanosine 5'-triphosphate.</text>
</comment>
<comment type="catalytic activity">
    <reaction evidence="1">
        <text>GTP + AH2 + S-adenosyl-L-methionine = (8S)-3',8-cyclo-7,8-dihydroguanosine 5'-triphosphate + 5'-deoxyadenosine + L-methionine + A + H(+)</text>
        <dbReference type="Rhea" id="RHEA:49576"/>
        <dbReference type="ChEBI" id="CHEBI:13193"/>
        <dbReference type="ChEBI" id="CHEBI:15378"/>
        <dbReference type="ChEBI" id="CHEBI:17319"/>
        <dbReference type="ChEBI" id="CHEBI:17499"/>
        <dbReference type="ChEBI" id="CHEBI:37565"/>
        <dbReference type="ChEBI" id="CHEBI:57844"/>
        <dbReference type="ChEBI" id="CHEBI:59789"/>
        <dbReference type="ChEBI" id="CHEBI:131766"/>
        <dbReference type="EC" id="4.1.99.22"/>
    </reaction>
</comment>
<comment type="cofactor">
    <cofactor evidence="1">
        <name>[4Fe-4S] cluster</name>
        <dbReference type="ChEBI" id="CHEBI:49883"/>
    </cofactor>
    <text evidence="1">Binds 2 [4Fe-4S] clusters. Binds 1 [4Fe-4S] cluster coordinated with 3 cysteines and an exchangeable S-adenosyl-L-methionine and 1 [4Fe-4S] cluster coordinated with 3 cysteines and the GTP-derived substrate.</text>
</comment>
<comment type="pathway">
    <text evidence="1">Cofactor biosynthesis; molybdopterin biosynthesis.</text>
</comment>
<comment type="subunit">
    <text evidence="1">Monomer and homodimer.</text>
</comment>
<comment type="similarity">
    <text evidence="1">Belongs to the radical SAM superfamily. MoaA family.</text>
</comment>
<keyword id="KW-0004">4Fe-4S</keyword>
<keyword id="KW-0342">GTP-binding</keyword>
<keyword id="KW-0408">Iron</keyword>
<keyword id="KW-0411">Iron-sulfur</keyword>
<keyword id="KW-0456">Lyase</keyword>
<keyword id="KW-0479">Metal-binding</keyword>
<keyword id="KW-0501">Molybdenum cofactor biosynthesis</keyword>
<keyword id="KW-0547">Nucleotide-binding</keyword>
<keyword id="KW-1185">Reference proteome</keyword>
<keyword id="KW-0949">S-adenosyl-L-methionine</keyword>
<feature type="chain" id="PRO_0000152967" description="GTP 3',8-cyclase">
    <location>
        <begin position="1"/>
        <end position="321"/>
    </location>
</feature>
<feature type="domain" description="Radical SAM core" evidence="2">
    <location>
        <begin position="5"/>
        <end position="233"/>
    </location>
</feature>
<feature type="binding site" evidence="1">
    <location>
        <position position="14"/>
    </location>
    <ligand>
        <name>GTP</name>
        <dbReference type="ChEBI" id="CHEBI:37565"/>
    </ligand>
</feature>
<feature type="binding site" evidence="1">
    <location>
        <position position="21"/>
    </location>
    <ligand>
        <name>[4Fe-4S] cluster</name>
        <dbReference type="ChEBI" id="CHEBI:49883"/>
        <label>1</label>
        <note>4Fe-4S-S-AdoMet</note>
    </ligand>
</feature>
<feature type="binding site" evidence="1">
    <location>
        <position position="25"/>
    </location>
    <ligand>
        <name>[4Fe-4S] cluster</name>
        <dbReference type="ChEBI" id="CHEBI:49883"/>
        <label>1</label>
        <note>4Fe-4S-S-AdoMet</note>
    </ligand>
</feature>
<feature type="binding site" evidence="1">
    <location>
        <position position="27"/>
    </location>
    <ligand>
        <name>S-adenosyl-L-methionine</name>
        <dbReference type="ChEBI" id="CHEBI:59789"/>
    </ligand>
</feature>
<feature type="binding site" evidence="1">
    <location>
        <position position="28"/>
    </location>
    <ligand>
        <name>[4Fe-4S] cluster</name>
        <dbReference type="ChEBI" id="CHEBI:49883"/>
        <label>1</label>
        <note>4Fe-4S-S-AdoMet</note>
    </ligand>
</feature>
<feature type="binding site" evidence="1">
    <location>
        <position position="64"/>
    </location>
    <ligand>
        <name>GTP</name>
        <dbReference type="ChEBI" id="CHEBI:37565"/>
    </ligand>
</feature>
<feature type="binding site" evidence="1">
    <location>
        <position position="68"/>
    </location>
    <ligand>
        <name>S-adenosyl-L-methionine</name>
        <dbReference type="ChEBI" id="CHEBI:59789"/>
    </ligand>
</feature>
<feature type="binding site" evidence="1">
    <location>
        <position position="95"/>
    </location>
    <ligand>
        <name>GTP</name>
        <dbReference type="ChEBI" id="CHEBI:37565"/>
    </ligand>
</feature>
<feature type="binding site" evidence="1">
    <location>
        <position position="119"/>
    </location>
    <ligand>
        <name>S-adenosyl-L-methionine</name>
        <dbReference type="ChEBI" id="CHEBI:59789"/>
    </ligand>
</feature>
<feature type="binding site" evidence="1">
    <location>
        <position position="155"/>
    </location>
    <ligand>
        <name>GTP</name>
        <dbReference type="ChEBI" id="CHEBI:37565"/>
    </ligand>
</feature>
<feature type="binding site" evidence="1">
    <location>
        <position position="189"/>
    </location>
    <ligand>
        <name>S-adenosyl-L-methionine</name>
        <dbReference type="ChEBI" id="CHEBI:59789"/>
    </ligand>
</feature>
<feature type="binding site" evidence="1">
    <location>
        <position position="249"/>
    </location>
    <ligand>
        <name>[4Fe-4S] cluster</name>
        <dbReference type="ChEBI" id="CHEBI:49883"/>
        <label>2</label>
        <note>4Fe-4S-substrate</note>
    </ligand>
</feature>
<feature type="binding site" evidence="1">
    <location>
        <position position="252"/>
    </location>
    <ligand>
        <name>[4Fe-4S] cluster</name>
        <dbReference type="ChEBI" id="CHEBI:49883"/>
        <label>2</label>
        <note>4Fe-4S-substrate</note>
    </ligand>
</feature>
<feature type="binding site" evidence="1">
    <location>
        <begin position="254"/>
        <end position="256"/>
    </location>
    <ligand>
        <name>GTP</name>
        <dbReference type="ChEBI" id="CHEBI:37565"/>
    </ligand>
</feature>
<feature type="binding site" evidence="1">
    <location>
        <position position="266"/>
    </location>
    <ligand>
        <name>[4Fe-4S] cluster</name>
        <dbReference type="ChEBI" id="CHEBI:49883"/>
        <label>2</label>
        <note>4Fe-4S-substrate</note>
    </ligand>
</feature>
<gene>
    <name evidence="1" type="primary">moaA</name>
    <name type="ordered locus">HP_0768</name>
</gene>
<organism>
    <name type="scientific">Helicobacter pylori (strain ATCC 700392 / 26695)</name>
    <name type="common">Campylobacter pylori</name>
    <dbReference type="NCBI Taxonomy" id="85962"/>
    <lineage>
        <taxon>Bacteria</taxon>
        <taxon>Pseudomonadati</taxon>
        <taxon>Campylobacterota</taxon>
        <taxon>Epsilonproteobacteria</taxon>
        <taxon>Campylobacterales</taxon>
        <taxon>Helicobacteraceae</taxon>
        <taxon>Helicobacter</taxon>
    </lineage>
</organism>
<name>MOAA_HELPY</name>
<dbReference type="EC" id="4.1.99.22" evidence="1"/>
<dbReference type="EMBL" id="AE000511">
    <property type="protein sequence ID" value="AAD07817.1"/>
    <property type="molecule type" value="Genomic_DNA"/>
</dbReference>
<dbReference type="PIR" id="H64615">
    <property type="entry name" value="H64615"/>
</dbReference>
<dbReference type="RefSeq" id="NP_207561.1">
    <property type="nucleotide sequence ID" value="NC_000915.1"/>
</dbReference>
<dbReference type="RefSeq" id="WP_001863441.1">
    <property type="nucleotide sequence ID" value="NC_018939.1"/>
</dbReference>
<dbReference type="SMR" id="P56414"/>
<dbReference type="FunCoup" id="P56414">
    <property type="interactions" value="284"/>
</dbReference>
<dbReference type="STRING" id="85962.HP_0768"/>
<dbReference type="PaxDb" id="85962-C694_03945"/>
<dbReference type="EnsemblBacteria" id="AAD07817">
    <property type="protein sequence ID" value="AAD07817"/>
    <property type="gene ID" value="HP_0768"/>
</dbReference>
<dbReference type="KEGG" id="heo:C694_03945"/>
<dbReference type="KEGG" id="hpy:HP_0768"/>
<dbReference type="PATRIC" id="fig|85962.47.peg.820"/>
<dbReference type="eggNOG" id="COG2896">
    <property type="taxonomic scope" value="Bacteria"/>
</dbReference>
<dbReference type="InParanoid" id="P56414"/>
<dbReference type="OrthoDB" id="9763993at2"/>
<dbReference type="PhylomeDB" id="P56414"/>
<dbReference type="UniPathway" id="UPA00344"/>
<dbReference type="Proteomes" id="UP000000429">
    <property type="component" value="Chromosome"/>
</dbReference>
<dbReference type="GO" id="GO:0051539">
    <property type="term" value="F:4 iron, 4 sulfur cluster binding"/>
    <property type="evidence" value="ECO:0007669"/>
    <property type="project" value="UniProtKB-UniRule"/>
</dbReference>
<dbReference type="GO" id="GO:0061799">
    <property type="term" value="F:cyclic pyranopterin monophosphate synthase activity"/>
    <property type="evidence" value="ECO:0000318"/>
    <property type="project" value="GO_Central"/>
</dbReference>
<dbReference type="GO" id="GO:0061798">
    <property type="term" value="F:GTP 3',8'-cyclase activity"/>
    <property type="evidence" value="ECO:0000318"/>
    <property type="project" value="GO_Central"/>
</dbReference>
<dbReference type="GO" id="GO:0005525">
    <property type="term" value="F:GTP binding"/>
    <property type="evidence" value="ECO:0007669"/>
    <property type="project" value="UniProtKB-UniRule"/>
</dbReference>
<dbReference type="GO" id="GO:0046872">
    <property type="term" value="F:metal ion binding"/>
    <property type="evidence" value="ECO:0007669"/>
    <property type="project" value="UniProtKB-KW"/>
</dbReference>
<dbReference type="GO" id="GO:1904047">
    <property type="term" value="F:S-adenosyl-L-methionine binding"/>
    <property type="evidence" value="ECO:0007669"/>
    <property type="project" value="UniProtKB-UniRule"/>
</dbReference>
<dbReference type="GO" id="GO:0006777">
    <property type="term" value="P:Mo-molybdopterin cofactor biosynthetic process"/>
    <property type="evidence" value="ECO:0000318"/>
    <property type="project" value="GO_Central"/>
</dbReference>
<dbReference type="CDD" id="cd01335">
    <property type="entry name" value="Radical_SAM"/>
    <property type="match status" value="1"/>
</dbReference>
<dbReference type="CDD" id="cd21117">
    <property type="entry name" value="Twitch_MoaA"/>
    <property type="match status" value="1"/>
</dbReference>
<dbReference type="Gene3D" id="3.20.20.70">
    <property type="entry name" value="Aldolase class I"/>
    <property type="match status" value="1"/>
</dbReference>
<dbReference type="HAMAP" id="MF_01225_B">
    <property type="entry name" value="MoaA_B"/>
    <property type="match status" value="1"/>
</dbReference>
<dbReference type="InterPro" id="IPR013785">
    <property type="entry name" value="Aldolase_TIM"/>
</dbReference>
<dbReference type="InterPro" id="IPR006638">
    <property type="entry name" value="Elp3/MiaA/NifB-like_rSAM"/>
</dbReference>
<dbReference type="InterPro" id="IPR013483">
    <property type="entry name" value="MoaA"/>
</dbReference>
<dbReference type="InterPro" id="IPR000385">
    <property type="entry name" value="MoaA_NifB_PqqE_Fe-S-bd_CS"/>
</dbReference>
<dbReference type="InterPro" id="IPR010505">
    <property type="entry name" value="MoaA_twitch"/>
</dbReference>
<dbReference type="InterPro" id="IPR050105">
    <property type="entry name" value="MoCo_biosynth_MoaA/MoaC"/>
</dbReference>
<dbReference type="InterPro" id="IPR007197">
    <property type="entry name" value="rSAM"/>
</dbReference>
<dbReference type="NCBIfam" id="TIGR02666">
    <property type="entry name" value="moaA"/>
    <property type="match status" value="1"/>
</dbReference>
<dbReference type="PANTHER" id="PTHR22960:SF0">
    <property type="entry name" value="MOLYBDENUM COFACTOR BIOSYNTHESIS PROTEIN 1"/>
    <property type="match status" value="1"/>
</dbReference>
<dbReference type="PANTHER" id="PTHR22960">
    <property type="entry name" value="MOLYBDOPTERIN COFACTOR SYNTHESIS PROTEIN A"/>
    <property type="match status" value="1"/>
</dbReference>
<dbReference type="Pfam" id="PF13353">
    <property type="entry name" value="Fer4_12"/>
    <property type="match status" value="1"/>
</dbReference>
<dbReference type="Pfam" id="PF06463">
    <property type="entry name" value="Mob_synth_C"/>
    <property type="match status" value="1"/>
</dbReference>
<dbReference type="Pfam" id="PF04055">
    <property type="entry name" value="Radical_SAM"/>
    <property type="match status" value="1"/>
</dbReference>
<dbReference type="SFLD" id="SFLDG01383">
    <property type="entry name" value="cyclic_pyranopterin_phosphate"/>
    <property type="match status" value="1"/>
</dbReference>
<dbReference type="SFLD" id="SFLDG01386">
    <property type="entry name" value="main_SPASM_domain-containing"/>
    <property type="match status" value="1"/>
</dbReference>
<dbReference type="SMART" id="SM00729">
    <property type="entry name" value="Elp3"/>
    <property type="match status" value="1"/>
</dbReference>
<dbReference type="SUPFAM" id="SSF102114">
    <property type="entry name" value="Radical SAM enzymes"/>
    <property type="match status" value="1"/>
</dbReference>
<dbReference type="PROSITE" id="PS01305">
    <property type="entry name" value="MOAA_NIFB_PQQE"/>
    <property type="match status" value="1"/>
</dbReference>
<dbReference type="PROSITE" id="PS51918">
    <property type="entry name" value="RADICAL_SAM"/>
    <property type="match status" value="1"/>
</dbReference>